<name>MDH_VIBPA</name>
<reference key="1">
    <citation type="journal article" date="2003" name="Lancet">
        <title>Genome sequence of Vibrio parahaemolyticus: a pathogenic mechanism distinct from that of V. cholerae.</title>
        <authorList>
            <person name="Makino K."/>
            <person name="Oshima K."/>
            <person name="Kurokawa K."/>
            <person name="Yokoyama K."/>
            <person name="Uda T."/>
            <person name="Tagomori K."/>
            <person name="Iijima Y."/>
            <person name="Najima M."/>
            <person name="Nakano M."/>
            <person name="Yamashita A."/>
            <person name="Kubota Y."/>
            <person name="Kimura S."/>
            <person name="Yasunaga T."/>
            <person name="Honda T."/>
            <person name="Shinagawa H."/>
            <person name="Hattori M."/>
            <person name="Iida T."/>
        </authorList>
    </citation>
    <scope>NUCLEOTIDE SEQUENCE [LARGE SCALE GENOMIC DNA]</scope>
    <source>
        <strain>RIMD 2210633</strain>
    </source>
</reference>
<protein>
    <recommendedName>
        <fullName evidence="1">Malate dehydrogenase</fullName>
        <ecNumber evidence="1">1.1.1.37</ecNumber>
    </recommendedName>
</protein>
<keyword id="KW-0520">NAD</keyword>
<keyword id="KW-0560">Oxidoreductase</keyword>
<keyword id="KW-0816">Tricarboxylic acid cycle</keyword>
<organism>
    <name type="scientific">Vibrio parahaemolyticus serotype O3:K6 (strain RIMD 2210633)</name>
    <dbReference type="NCBI Taxonomy" id="223926"/>
    <lineage>
        <taxon>Bacteria</taxon>
        <taxon>Pseudomonadati</taxon>
        <taxon>Pseudomonadota</taxon>
        <taxon>Gammaproteobacteria</taxon>
        <taxon>Vibrionales</taxon>
        <taxon>Vibrionaceae</taxon>
        <taxon>Vibrio</taxon>
    </lineage>
</organism>
<feature type="chain" id="PRO_0000113332" description="Malate dehydrogenase">
    <location>
        <begin position="1"/>
        <end position="311"/>
    </location>
</feature>
<feature type="active site" description="Proton acceptor" evidence="1">
    <location>
        <position position="177"/>
    </location>
</feature>
<feature type="binding site" evidence="1">
    <location>
        <begin position="7"/>
        <end position="13"/>
    </location>
    <ligand>
        <name>NAD(+)</name>
        <dbReference type="ChEBI" id="CHEBI:57540"/>
    </ligand>
</feature>
<feature type="binding site" evidence="1">
    <location>
        <position position="34"/>
    </location>
    <ligand>
        <name>NAD(+)</name>
        <dbReference type="ChEBI" id="CHEBI:57540"/>
    </ligand>
</feature>
<feature type="binding site" evidence="1">
    <location>
        <position position="81"/>
    </location>
    <ligand>
        <name>substrate</name>
    </ligand>
</feature>
<feature type="binding site" evidence="1">
    <location>
        <position position="87"/>
    </location>
    <ligand>
        <name>substrate</name>
    </ligand>
</feature>
<feature type="binding site" evidence="1">
    <location>
        <position position="94"/>
    </location>
    <ligand>
        <name>NAD(+)</name>
        <dbReference type="ChEBI" id="CHEBI:57540"/>
    </ligand>
</feature>
<feature type="binding site" evidence="1">
    <location>
        <begin position="117"/>
        <end position="119"/>
    </location>
    <ligand>
        <name>NAD(+)</name>
        <dbReference type="ChEBI" id="CHEBI:57540"/>
    </ligand>
</feature>
<feature type="binding site" evidence="1">
    <location>
        <position position="119"/>
    </location>
    <ligand>
        <name>substrate</name>
    </ligand>
</feature>
<feature type="binding site" evidence="1">
    <location>
        <position position="153"/>
    </location>
    <ligand>
        <name>substrate</name>
    </ligand>
</feature>
<feature type="binding site" evidence="1">
    <location>
        <position position="227"/>
    </location>
    <ligand>
        <name>NAD(+)</name>
        <dbReference type="ChEBI" id="CHEBI:57540"/>
    </ligand>
</feature>
<proteinExistence type="inferred from homology"/>
<evidence type="ECO:0000255" key="1">
    <source>
        <dbReference type="HAMAP-Rule" id="MF_01516"/>
    </source>
</evidence>
<gene>
    <name evidence="1" type="primary">mdh</name>
    <name type="ordered locus">VP0325</name>
</gene>
<comment type="function">
    <text evidence="1">Catalyzes the reversible oxidation of malate to oxaloacetate.</text>
</comment>
<comment type="catalytic activity">
    <reaction evidence="1">
        <text>(S)-malate + NAD(+) = oxaloacetate + NADH + H(+)</text>
        <dbReference type="Rhea" id="RHEA:21432"/>
        <dbReference type="ChEBI" id="CHEBI:15378"/>
        <dbReference type="ChEBI" id="CHEBI:15589"/>
        <dbReference type="ChEBI" id="CHEBI:16452"/>
        <dbReference type="ChEBI" id="CHEBI:57540"/>
        <dbReference type="ChEBI" id="CHEBI:57945"/>
        <dbReference type="EC" id="1.1.1.37"/>
    </reaction>
</comment>
<comment type="subunit">
    <text evidence="1">Homodimer.</text>
</comment>
<comment type="similarity">
    <text evidence="1">Belongs to the LDH/MDH superfamily. MDH type 1 family.</text>
</comment>
<accession>Q87SU7</accession>
<dbReference type="EC" id="1.1.1.37" evidence="1"/>
<dbReference type="EMBL" id="BA000031">
    <property type="protein sequence ID" value="BAC58588.1"/>
    <property type="molecule type" value="Genomic_DNA"/>
</dbReference>
<dbReference type="RefSeq" id="NP_796704.1">
    <property type="nucleotide sequence ID" value="NC_004603.1"/>
</dbReference>
<dbReference type="RefSeq" id="WP_005454639.1">
    <property type="nucleotide sequence ID" value="NC_004603.1"/>
</dbReference>
<dbReference type="SMR" id="Q87SU7"/>
<dbReference type="GeneID" id="1187792"/>
<dbReference type="KEGG" id="vpa:VP0325"/>
<dbReference type="PATRIC" id="fig|223926.6.peg.312"/>
<dbReference type="eggNOG" id="COG0039">
    <property type="taxonomic scope" value="Bacteria"/>
</dbReference>
<dbReference type="HOGENOM" id="CLU_047181_1_0_6"/>
<dbReference type="Proteomes" id="UP000002493">
    <property type="component" value="Chromosome 1"/>
</dbReference>
<dbReference type="GO" id="GO:0005737">
    <property type="term" value="C:cytoplasm"/>
    <property type="evidence" value="ECO:0007669"/>
    <property type="project" value="TreeGrafter"/>
</dbReference>
<dbReference type="GO" id="GO:0030060">
    <property type="term" value="F:L-malate dehydrogenase (NAD+) activity"/>
    <property type="evidence" value="ECO:0007669"/>
    <property type="project" value="UniProtKB-UniRule"/>
</dbReference>
<dbReference type="GO" id="GO:0006108">
    <property type="term" value="P:malate metabolic process"/>
    <property type="evidence" value="ECO:0007669"/>
    <property type="project" value="InterPro"/>
</dbReference>
<dbReference type="GO" id="GO:0006099">
    <property type="term" value="P:tricarboxylic acid cycle"/>
    <property type="evidence" value="ECO:0007669"/>
    <property type="project" value="UniProtKB-UniRule"/>
</dbReference>
<dbReference type="CDD" id="cd01337">
    <property type="entry name" value="MDH_glyoxysomal_mitochondrial"/>
    <property type="match status" value="1"/>
</dbReference>
<dbReference type="FunFam" id="3.40.50.720:FF:000017">
    <property type="entry name" value="Malate dehydrogenase"/>
    <property type="match status" value="1"/>
</dbReference>
<dbReference type="FunFam" id="3.90.110.10:FF:000001">
    <property type="entry name" value="Malate dehydrogenase"/>
    <property type="match status" value="1"/>
</dbReference>
<dbReference type="Gene3D" id="3.90.110.10">
    <property type="entry name" value="Lactate dehydrogenase/glycoside hydrolase, family 4, C-terminal"/>
    <property type="match status" value="1"/>
</dbReference>
<dbReference type="Gene3D" id="3.40.50.720">
    <property type="entry name" value="NAD(P)-binding Rossmann-like Domain"/>
    <property type="match status" value="1"/>
</dbReference>
<dbReference type="HAMAP" id="MF_01516">
    <property type="entry name" value="Malate_dehydrog_1"/>
    <property type="match status" value="1"/>
</dbReference>
<dbReference type="InterPro" id="IPR001557">
    <property type="entry name" value="L-lactate/malate_DH"/>
</dbReference>
<dbReference type="InterPro" id="IPR022383">
    <property type="entry name" value="Lactate/malate_DH_C"/>
</dbReference>
<dbReference type="InterPro" id="IPR001236">
    <property type="entry name" value="Lactate/malate_DH_N"/>
</dbReference>
<dbReference type="InterPro" id="IPR015955">
    <property type="entry name" value="Lactate_DH/Glyco_Ohase_4_C"/>
</dbReference>
<dbReference type="InterPro" id="IPR001252">
    <property type="entry name" value="Malate_DH_AS"/>
</dbReference>
<dbReference type="InterPro" id="IPR010097">
    <property type="entry name" value="Malate_DH_type1"/>
</dbReference>
<dbReference type="InterPro" id="IPR023958">
    <property type="entry name" value="Malate_DH_type1_bac"/>
</dbReference>
<dbReference type="InterPro" id="IPR036291">
    <property type="entry name" value="NAD(P)-bd_dom_sf"/>
</dbReference>
<dbReference type="NCBIfam" id="TIGR01772">
    <property type="entry name" value="MDH_euk_gproteo"/>
    <property type="match status" value="1"/>
</dbReference>
<dbReference type="PANTHER" id="PTHR11540">
    <property type="entry name" value="MALATE AND LACTATE DEHYDROGENASE"/>
    <property type="match status" value="1"/>
</dbReference>
<dbReference type="PANTHER" id="PTHR11540:SF16">
    <property type="entry name" value="MALATE DEHYDROGENASE, MITOCHONDRIAL"/>
    <property type="match status" value="1"/>
</dbReference>
<dbReference type="Pfam" id="PF02866">
    <property type="entry name" value="Ldh_1_C"/>
    <property type="match status" value="1"/>
</dbReference>
<dbReference type="Pfam" id="PF00056">
    <property type="entry name" value="Ldh_1_N"/>
    <property type="match status" value="1"/>
</dbReference>
<dbReference type="PIRSF" id="PIRSF000102">
    <property type="entry name" value="Lac_mal_DH"/>
    <property type="match status" value="1"/>
</dbReference>
<dbReference type="SUPFAM" id="SSF56327">
    <property type="entry name" value="LDH C-terminal domain-like"/>
    <property type="match status" value="1"/>
</dbReference>
<dbReference type="SUPFAM" id="SSF51735">
    <property type="entry name" value="NAD(P)-binding Rossmann-fold domains"/>
    <property type="match status" value="1"/>
</dbReference>
<dbReference type="PROSITE" id="PS00068">
    <property type="entry name" value="MDH"/>
    <property type="match status" value="1"/>
</dbReference>
<sequence length="311" mass="32172">MKVAVIGAAGGIGQALALLLKNRLPAGSDLALYDIAPVTPGVAADLSHIPTPVSIKGYAGEDPTPALEGADVVLISAGVARKPGMDRADLFNVNAGIVKSLAEKIAVVCPKACVGIITNPVNTTVPIAAEVLKKAGVYDKRRLFGITTLDVIRSETFVAELKGKDPSDIRVPVIGGHSGVTILPLLSQVEGVEFTAEEVEALTKRIQNAGTEVVEAKAGGGSATLSMGQAACRFGLALVRALQGEEGVVECAYVEGDSEHAPYFAQPVKLGKEGVEEVLSYGELSDFEKAALDGMLETLNGDINIGVEFAK</sequence>